<keyword id="KW-0106">Calcium</keyword>
<keyword id="KW-0108">Calcium channel impairing toxin</keyword>
<keyword id="KW-0903">Direct protein sequencing</keyword>
<keyword id="KW-1015">Disulfide bond</keyword>
<keyword id="KW-0245">EGF-like domain</keyword>
<keyword id="KW-0325">Glycoprotein</keyword>
<keyword id="KW-0872">Ion channel impairing toxin</keyword>
<keyword id="KW-0528">Neurotoxin</keyword>
<keyword id="KW-0638">Presynaptic neurotoxin</keyword>
<keyword id="KW-0677">Repeat</keyword>
<keyword id="KW-0964">Secreted</keyword>
<keyword id="KW-0768">Sushi</keyword>
<keyword id="KW-0800">Toxin</keyword>
<keyword id="KW-1218">Voltage-gated calcium channel impairing toxin</keyword>
<proteinExistence type="evidence at protein level"/>
<reference key="1">
    <citation type="journal article" date="2017" name="BMC Evol. Biol.">
        <title>Comparative analyses of glycerotoxin expression unveil a novel structural organization of the bloodworm venom system.</title>
        <authorList>
            <person name="Richter S."/>
            <person name="Helm C."/>
            <person name="Meunier F.A."/>
            <person name="Hering L."/>
            <person name="Campbell L.I."/>
            <person name="Drukewitz S.H."/>
            <person name="Undheim E.A."/>
            <person name="Jenner R.A."/>
            <person name="Schiavo G."/>
            <person name="Bleidorn C."/>
        </authorList>
    </citation>
    <scope>NUCLEOTIDE SEQUENCE [GENOMIC DNA]</scope>
    <scope>PROTEIN SEQUENCE OF 486-503; 718-729; 783-795; 888-894 AND 990-1001</scope>
    <scope>SUBUNIT</scope>
    <scope>SUBCELLULAR LOCATION</scope>
    <scope>TISSUE SPECIFICITY</scope>
    <source>
        <tissue>Pharynx</tissue>
    </source>
</reference>
<reference key="2">
    <citation type="journal article" date="2002" name="EMBO J.">
        <title>Glycerotoxin from Glycera convoluta stimulates neurosecretion by up-regulating N-type Ca2+ channel activity.</title>
        <authorList>
            <person name="Meunier F.A."/>
            <person name="Feng Z.P."/>
            <person name="Molgo J."/>
            <person name="Zamponi G.W."/>
            <person name="Schiavo G."/>
        </authorList>
    </citation>
    <scope>FUNCTION</scope>
    <scope>SUBUNIT</scope>
</reference>
<reference key="3">
    <citation type="journal article" date="2010" name="J. Cell Sci.">
        <title>Sustained synaptic-vesicle recycling by bulk endocytosis contributes to the maintenance of high-rate neurotransmitter release stimulated by glycerotoxin.</title>
        <authorList>
            <person name="Meunier F.A."/>
            <person name="Nguyen T.H."/>
            <person name="Colasante C."/>
            <person name="Luo F."/>
            <person name="Sullivan R.K."/>
            <person name="Lavidis N.A."/>
            <person name="Molgo J."/>
            <person name="Meriney S.D."/>
            <person name="Schiavo G."/>
        </authorList>
    </citation>
    <scope>FUNCTION</scope>
</reference>
<name>GLTX_GLYTI</name>
<comment type="function">
    <text evidence="5 6">Potent venom presynaptic neurotoxin that promotes a long-lasting increase in spontaneous neurotransmitter release at the peripheral and central synapses by selective activation of Cav2.2/CACNA1B (N-type) channels (PubMed:12485994). In addition, it drastically enhances synaptic-vesicle recycling, an effect that is prevented by the Cav2.2-specific inhibitor conotoxin-MVIIA (PubMed:20215402). It activates Cav2.2/CACNA1B by shifting the current-voltage relationship of channels towards more hyperpolarized potentiels in a reversible manner (PubMed:12485994). May have two separate sites of action on Cav2.2: one high affinity linked to changes in gating properties, and a second low affinity that results in block of current activity (PubMed:12485994).</text>
</comment>
<comment type="subunit">
    <text evidence="5 10">Dimer; probably disulfide-linked (Probable). Interacts with Cav2.2/CACNA1B calcium channel (PubMed:12485994).</text>
</comment>
<comment type="subcellular location">
    <subcellularLocation>
        <location>Secreted</location>
    </subcellularLocation>
    <text evidence="7">Released in prey through a series of pores on the teeth.</text>
</comment>
<comment type="tissue specificity">
    <text evidence="7">Expressed exclusively in the four pharyngeal lobes and in tissue located at the base of the teeth. No distinct expression is visible in the putative venom glands or elsewhere in the pharynx.</text>
</comment>
<comment type="miscellaneous">
    <text evidence="5">Does not show activity on Cav1 and Cav2.1/CACNA1A calcium channels.</text>
</comment>
<comment type="miscellaneous">
    <text evidence="10">Has at least 2 paralogs (GLTx paralog 2 and GLTx paralog 3). Paralog 1 is the most highly expressed paralog.</text>
</comment>
<feature type="chain" id="PRO_0000456797" description="Glycerotoxin paralog 1">
    <location>
        <begin position="1" status="less than"/>
        <end position="1207" status="greater than"/>
    </location>
</feature>
<feature type="domain" description="EGF-like" evidence="1">
    <location>
        <begin position="79"/>
        <end position="120"/>
    </location>
</feature>
<feature type="domain" description="Sushi" evidence="2">
    <location>
        <begin position="122"/>
        <end position="187"/>
    </location>
</feature>
<feature type="domain" description="WSC 1" evidence="4">
    <location>
        <begin position="300"/>
        <end position="391"/>
    </location>
</feature>
<feature type="domain" description="WSC 2" evidence="4">
    <location>
        <begin position="392"/>
        <end position="476"/>
    </location>
</feature>
<feature type="glycosylation site" description="N-linked (GlcNAc...) asparagine" evidence="3">
    <location>
        <position position="745"/>
    </location>
</feature>
<feature type="disulfide bond" evidence="1">
    <location>
        <begin position="83"/>
        <end position="95"/>
    </location>
</feature>
<feature type="disulfide bond" evidence="1">
    <location>
        <begin position="90"/>
        <end position="104"/>
    </location>
</feature>
<feature type="disulfide bond" evidence="1">
    <location>
        <begin position="106"/>
        <end position="119"/>
    </location>
</feature>
<feature type="disulfide bond" evidence="2">
    <location>
        <begin position="124"/>
        <end position="167"/>
    </location>
</feature>
<feature type="disulfide bond" evidence="2">
    <location>
        <begin position="151"/>
        <end position="185"/>
    </location>
</feature>
<feature type="sequence conflict" description="In Ref. 1; AQX92141." evidence="9" ref="1">
    <original>E</original>
    <variation>GGCYQSCE</variation>
    <location>
        <position position="8"/>
    </location>
</feature>
<feature type="sequence conflict" description="In Ref. 1; AQX92141." evidence="9" ref="1">
    <original>S</original>
    <variation>T</variation>
    <location>
        <position position="28"/>
    </location>
</feature>
<feature type="sequence conflict" description="In Ref. 1; AQX92141." evidence="9" ref="1">
    <original>N</original>
    <variation>K</variation>
    <location>
        <position position="39"/>
    </location>
</feature>
<feature type="sequence conflict" description="In Ref. 1; AQX92141/AQX92142." evidence="9" ref="1">
    <original>S</original>
    <variation>N</variation>
    <location>
        <position position="46"/>
    </location>
</feature>
<feature type="sequence conflict" description="In Ref. 1; AQX92141." evidence="9" ref="1">
    <original>T</original>
    <variation>G</variation>
    <location>
        <position position="57"/>
    </location>
</feature>
<feature type="sequence conflict" description="In Ref. 1; AQX92141." evidence="9" ref="1">
    <original>P</original>
    <variation>S</variation>
    <location>
        <position position="66"/>
    </location>
</feature>
<feature type="sequence conflict" description="In Ref. 1; AQX92141." evidence="9" ref="1">
    <original>QA</original>
    <variation>PT</variation>
    <location>
        <begin position="154"/>
        <end position="155"/>
    </location>
</feature>
<feature type="sequence conflict" description="In Ref. 1; AQX92142." evidence="9" ref="1">
    <original>DGPSY</original>
    <variation>GGPSH</variation>
    <location>
        <begin position="160"/>
        <end position="164"/>
    </location>
</feature>
<feature type="sequence conflict" description="In Ref. 1; AQX92141." evidence="9" ref="1">
    <location>
        <begin position="243"/>
        <end position="246"/>
    </location>
</feature>
<feature type="sequence conflict" description="In Ref. 1; AQX92142." evidence="9" ref="1">
    <original>T</original>
    <variation>I</variation>
    <location>
        <position position="319"/>
    </location>
</feature>
<feature type="sequence conflict" description="In Ref. 1; AQX92141." evidence="9" ref="1">
    <original>M</original>
    <variation>T</variation>
    <location>
        <position position="482"/>
    </location>
</feature>
<feature type="sequence conflict" description="In Ref. 1; AA sequence." evidence="9" ref="1">
    <original>F</original>
    <variation>M</variation>
    <location>
        <position position="501"/>
    </location>
</feature>
<feature type="sequence conflict" description="In Ref. 1; AQX92141." evidence="9" ref="1">
    <original>E</original>
    <variation>K</variation>
    <location>
        <position position="616"/>
    </location>
</feature>
<feature type="sequence conflict" description="In Ref. 1; AQX92141." evidence="9" ref="1">
    <original>D</original>
    <variation>N</variation>
    <location>
        <position position="741"/>
    </location>
</feature>
<feature type="sequence conflict" description="In Ref. 1; AQX92141/AQX92142." evidence="9" ref="1">
    <original>V</original>
    <variation>A</variation>
    <location>
        <position position="912"/>
    </location>
</feature>
<feature type="sequence conflict" description="In Ref. 1; AQX92141." evidence="9" ref="1">
    <original>N</original>
    <variation>D</variation>
    <location>
        <position position="946"/>
    </location>
</feature>
<feature type="sequence conflict" description="In Ref. 1; AQX92141/AQX92142." evidence="9" ref="1">
    <original>T</original>
    <variation>I</variation>
    <location>
        <position position="1030"/>
    </location>
</feature>
<feature type="sequence conflict" description="In Ref. 1; AQX92141." evidence="9" ref="1">
    <original>K</original>
    <variation>E</variation>
    <location>
        <position position="1110"/>
    </location>
</feature>
<feature type="sequence conflict" description="In Ref. 1; AQX92141." evidence="9" ref="1">
    <original>D</original>
    <variation>N</variation>
    <location>
        <position position="1126"/>
    </location>
</feature>
<feature type="sequence conflict" description="In Ref. 1; AQX92142." evidence="9" ref="1">
    <original>F</original>
    <variation>L</variation>
    <location>
        <position position="1159"/>
    </location>
</feature>
<feature type="sequence conflict" description="In Ref. 1; AQX92142." evidence="9" ref="1">
    <original>AWMIEVD</original>
    <variation>DW</variation>
    <location>
        <begin position="1201"/>
        <end position="1207"/>
    </location>
</feature>
<feature type="non-terminal residue" evidence="11">
    <location>
        <position position="1"/>
    </location>
</feature>
<feature type="non-terminal residue" evidence="11">
    <location>
        <position position="1207"/>
    </location>
</feature>
<sequence length="1207" mass="133123">GGCYQSCEPHTLKCGSVSFEAKCKSGWSCYPVTDNIASNACDRFKSCQDRWATVKETDAPCTSCVPGFQLTSRGYCSQDLNECNRNNGGCTNGKCINTEGSYHCDCDRGYLATSSRTKCEGVECEPLTLANGKVQSNKGSWIFGSRALFTCDDQARSVLDGPSYITCNLDAAGLTASWSGTSPTCQNDDEHDRFAEVFHLRFHGKKLDGVSLVTGLSPRSTAYRCHKDSTCQGIMTRAEEFEVSATGLTVYDGGVLTKTLGQSRADGDALTDDASMDIYTKVDVSSAAASSYQDVLDAMVGTSLGCYTTSSMASWEDYTLDDGRATTCNQICLQAGYDYFGIQASDKCWCGQKPPVEKVGDGECSTVCVNQANILCGSATTANIYQVYRDRSLGFCYTGNLGTETVPSAKTKDECVTVCRGQGYYTANIRNSGECFCDNSLPGGPRVDPTKCDEDGSGHSTVYMTNPAYFMSNDQGAQINPMTTRMYDDTGSVTGMTTGLFQRLPGLRIFTSDRLVLYSAEEVQFHDVQNDYADTCGEIKRIDGESDRSGDLILHFFHFRLSQLAKHTSDRASRVYIYAQKVVIDCDIQVQFSLMIRATKIVVSTGKVFKILVGSESSQIEMDVDDVKNNGPPRNLQQMKDSLQCARMLAQSWDDTEKQKLAFNILHEMTSPTAGNEAQRSVQTMASALKLQLEGMFKNDIHHVPSYSAAYFTYLMKADSDIVNAYAARLNALEVITTSRDDFLNYTQELEKIHQDTSIAQAKKRFDETMKLYKKEDLVYTKLQAAYDTALTNLRGVIPTFRKSIEAQEDHLRFKALLSFLELGVAAMDPAAVASVSKGFYDDVTDIAASSIWGIDQVVTNIDSFTDVMTNNLNEMMSEVKPYDGTKYAYEIEKVANMHVFVEEWRNFQVEVNNILGDDTVSALGGAGDYGRNLVKLTNIGMALTNAMINRAEKTRDAAQKRTTWDLLVEQGRRTTEVIKGFKAANSERAAANSVVAEQIRDITSEINGDLANFCEAYFFEKLEPCPKSTQPRFGGDLLSVQLSISRAEREAASLGLDGSPVSREVTITNTDASEDCIDVTQCPVTVFKRDRAFSYEVPIDNFDLSDWDKYRVKEIEVKAIGATPDRTETDLKLFVRSSGSFSGKSGGTHYNFLTDDFFCVYEYDINSPIDAPPESASGRCTVYARGSKKDMTRYATPYAAWMIEVD</sequence>
<protein>
    <recommendedName>
        <fullName evidence="8">Glycerotoxin paralog 1</fullName>
        <shortName evidence="8">GLTx paralog 1</shortName>
    </recommendedName>
</protein>
<accession>A0A1U9VX91</accession>
<accession>A0A1U9VX95</accession>
<accession>A0A1U9VX98</accession>
<evidence type="ECO:0000255" key="1">
    <source>
        <dbReference type="PROSITE-ProRule" id="PRU00076"/>
    </source>
</evidence>
<evidence type="ECO:0000255" key="2">
    <source>
        <dbReference type="PROSITE-ProRule" id="PRU00302"/>
    </source>
</evidence>
<evidence type="ECO:0000255" key="3">
    <source>
        <dbReference type="PROSITE-ProRule" id="PRU00498"/>
    </source>
</evidence>
<evidence type="ECO:0000255" key="4">
    <source>
        <dbReference type="PROSITE-ProRule" id="PRU00558"/>
    </source>
</evidence>
<evidence type="ECO:0000269" key="5">
    <source>
    </source>
</evidence>
<evidence type="ECO:0000269" key="6">
    <source>
    </source>
</evidence>
<evidence type="ECO:0000269" key="7">
    <source>
    </source>
</evidence>
<evidence type="ECO:0000303" key="8">
    <source>
    </source>
</evidence>
<evidence type="ECO:0000305" key="9"/>
<evidence type="ECO:0000305" key="10">
    <source>
    </source>
</evidence>
<evidence type="ECO:0000312" key="11">
    <source>
        <dbReference type="EMBL" id="AQX92140.1"/>
    </source>
</evidence>
<organism>
    <name type="scientific">Glycera tridactyla</name>
    <name type="common">Glycerine worm</name>
    <name type="synonym">Glycera convoluta</name>
    <dbReference type="NCBI Taxonomy" id="104710"/>
    <lineage>
        <taxon>Eukaryota</taxon>
        <taxon>Metazoa</taxon>
        <taxon>Spiralia</taxon>
        <taxon>Lophotrochozoa</taxon>
        <taxon>Annelida</taxon>
        <taxon>Polychaeta</taxon>
        <taxon>Errantia</taxon>
        <taxon>Phyllodocida</taxon>
        <taxon>Glyceridae</taxon>
        <taxon>Glycera</taxon>
    </lineage>
</organism>
<dbReference type="EMBL" id="KY464001">
    <property type="protein sequence ID" value="AQX92140.1"/>
    <property type="molecule type" value="Genomic_DNA"/>
</dbReference>
<dbReference type="EMBL" id="KY464002">
    <property type="protein sequence ID" value="AQX92141.1"/>
    <property type="molecule type" value="Genomic_DNA"/>
</dbReference>
<dbReference type="EMBL" id="KY464003">
    <property type="protein sequence ID" value="AQX92142.1"/>
    <property type="molecule type" value="Genomic_DNA"/>
</dbReference>
<dbReference type="GO" id="GO:0005576">
    <property type="term" value="C:extracellular region"/>
    <property type="evidence" value="ECO:0007669"/>
    <property type="project" value="UniProtKB-SubCell"/>
</dbReference>
<dbReference type="GO" id="GO:0044231">
    <property type="term" value="C:host cell presynaptic membrane"/>
    <property type="evidence" value="ECO:0007669"/>
    <property type="project" value="UniProtKB-KW"/>
</dbReference>
<dbReference type="GO" id="GO:0005246">
    <property type="term" value="F:calcium channel regulator activity"/>
    <property type="evidence" value="ECO:0007669"/>
    <property type="project" value="UniProtKB-KW"/>
</dbReference>
<dbReference type="GO" id="GO:0005509">
    <property type="term" value="F:calcium ion binding"/>
    <property type="evidence" value="ECO:0007669"/>
    <property type="project" value="InterPro"/>
</dbReference>
<dbReference type="GO" id="GO:0090729">
    <property type="term" value="F:toxin activity"/>
    <property type="evidence" value="ECO:0007669"/>
    <property type="project" value="UniProtKB-KW"/>
</dbReference>
<dbReference type="CDD" id="cd00033">
    <property type="entry name" value="CCP"/>
    <property type="match status" value="1"/>
</dbReference>
<dbReference type="CDD" id="cd00054">
    <property type="entry name" value="EGF_CA"/>
    <property type="match status" value="1"/>
</dbReference>
<dbReference type="FunFam" id="2.10.25.10:FF:000003">
    <property type="entry name" value="fibrillin-1 isoform X1"/>
    <property type="match status" value="1"/>
</dbReference>
<dbReference type="Gene3D" id="2.10.70.10">
    <property type="entry name" value="Complement Module, domain 1"/>
    <property type="match status" value="1"/>
</dbReference>
<dbReference type="Gene3D" id="2.10.25.10">
    <property type="entry name" value="Laminin"/>
    <property type="match status" value="1"/>
</dbReference>
<dbReference type="InterPro" id="IPR001881">
    <property type="entry name" value="EGF-like_Ca-bd_dom"/>
</dbReference>
<dbReference type="InterPro" id="IPR000742">
    <property type="entry name" value="EGF-like_dom"/>
</dbReference>
<dbReference type="InterPro" id="IPR000152">
    <property type="entry name" value="EGF-type_Asp/Asn_hydroxyl_site"/>
</dbReference>
<dbReference type="InterPro" id="IPR018097">
    <property type="entry name" value="EGF_Ca-bd_CS"/>
</dbReference>
<dbReference type="InterPro" id="IPR049883">
    <property type="entry name" value="NOTCH1_EGF-like"/>
</dbReference>
<dbReference type="InterPro" id="IPR035976">
    <property type="entry name" value="Sushi/SCR/CCP_sf"/>
</dbReference>
<dbReference type="InterPro" id="IPR000436">
    <property type="entry name" value="Sushi_SCR_CCP_dom"/>
</dbReference>
<dbReference type="InterPro" id="IPR002889">
    <property type="entry name" value="WSC_carb-bd"/>
</dbReference>
<dbReference type="PANTHER" id="PTHR34714">
    <property type="entry name" value="EGF-LIKE DOMAIN-CONTAINING PROTEIN"/>
    <property type="match status" value="1"/>
</dbReference>
<dbReference type="PANTHER" id="PTHR34714:SF2">
    <property type="entry name" value="EGF-LIKE DOMAIN-CONTAINING PROTEIN"/>
    <property type="match status" value="1"/>
</dbReference>
<dbReference type="Pfam" id="PF07645">
    <property type="entry name" value="EGF_CA"/>
    <property type="match status" value="1"/>
</dbReference>
<dbReference type="Pfam" id="PF01822">
    <property type="entry name" value="WSC"/>
    <property type="match status" value="1"/>
</dbReference>
<dbReference type="SMART" id="SM00032">
    <property type="entry name" value="CCP"/>
    <property type="match status" value="1"/>
</dbReference>
<dbReference type="SMART" id="SM00181">
    <property type="entry name" value="EGF"/>
    <property type="match status" value="2"/>
</dbReference>
<dbReference type="SMART" id="SM00179">
    <property type="entry name" value="EGF_CA"/>
    <property type="match status" value="1"/>
</dbReference>
<dbReference type="SMART" id="SM00321">
    <property type="entry name" value="WSC"/>
    <property type="match status" value="1"/>
</dbReference>
<dbReference type="SUPFAM" id="SSF57535">
    <property type="entry name" value="Complement control module/SCR domain"/>
    <property type="match status" value="1"/>
</dbReference>
<dbReference type="SUPFAM" id="SSF57196">
    <property type="entry name" value="EGF/Laminin"/>
    <property type="match status" value="1"/>
</dbReference>
<dbReference type="PROSITE" id="PS00010">
    <property type="entry name" value="ASX_HYDROXYL"/>
    <property type="match status" value="1"/>
</dbReference>
<dbReference type="PROSITE" id="PS01186">
    <property type="entry name" value="EGF_2"/>
    <property type="match status" value="1"/>
</dbReference>
<dbReference type="PROSITE" id="PS50026">
    <property type="entry name" value="EGF_3"/>
    <property type="match status" value="1"/>
</dbReference>
<dbReference type="PROSITE" id="PS01187">
    <property type="entry name" value="EGF_CA"/>
    <property type="match status" value="1"/>
</dbReference>
<dbReference type="PROSITE" id="PS50923">
    <property type="entry name" value="SUSHI"/>
    <property type="match status" value="1"/>
</dbReference>
<dbReference type="PROSITE" id="PS51212">
    <property type="entry name" value="WSC"/>
    <property type="match status" value="2"/>
</dbReference>